<gene>
    <name evidence="1" type="primary">mutS</name>
    <name type="ordered locus">HS_0005</name>
</gene>
<dbReference type="EMBL" id="CP000436">
    <property type="protein sequence ID" value="ABI24286.1"/>
    <property type="molecule type" value="Genomic_DNA"/>
</dbReference>
<dbReference type="SMR" id="Q0I1B8"/>
<dbReference type="KEGG" id="hso:HS_0005"/>
<dbReference type="eggNOG" id="COG0249">
    <property type="taxonomic scope" value="Bacteria"/>
</dbReference>
<dbReference type="HOGENOM" id="CLU_002472_4_0_6"/>
<dbReference type="GO" id="GO:0005829">
    <property type="term" value="C:cytosol"/>
    <property type="evidence" value="ECO:0007669"/>
    <property type="project" value="TreeGrafter"/>
</dbReference>
<dbReference type="GO" id="GO:0005524">
    <property type="term" value="F:ATP binding"/>
    <property type="evidence" value="ECO:0007669"/>
    <property type="project" value="UniProtKB-UniRule"/>
</dbReference>
<dbReference type="GO" id="GO:0140664">
    <property type="term" value="F:ATP-dependent DNA damage sensor activity"/>
    <property type="evidence" value="ECO:0007669"/>
    <property type="project" value="InterPro"/>
</dbReference>
<dbReference type="GO" id="GO:0003684">
    <property type="term" value="F:damaged DNA binding"/>
    <property type="evidence" value="ECO:0007669"/>
    <property type="project" value="UniProtKB-UniRule"/>
</dbReference>
<dbReference type="GO" id="GO:0030983">
    <property type="term" value="F:mismatched DNA binding"/>
    <property type="evidence" value="ECO:0007669"/>
    <property type="project" value="InterPro"/>
</dbReference>
<dbReference type="GO" id="GO:0006298">
    <property type="term" value="P:mismatch repair"/>
    <property type="evidence" value="ECO:0007669"/>
    <property type="project" value="UniProtKB-UniRule"/>
</dbReference>
<dbReference type="CDD" id="cd03284">
    <property type="entry name" value="ABC_MutS1"/>
    <property type="match status" value="1"/>
</dbReference>
<dbReference type="FunFam" id="1.10.1420.10:FF:000002">
    <property type="entry name" value="DNA mismatch repair protein MutS"/>
    <property type="match status" value="1"/>
</dbReference>
<dbReference type="FunFam" id="3.40.1170.10:FF:000001">
    <property type="entry name" value="DNA mismatch repair protein MutS"/>
    <property type="match status" value="1"/>
</dbReference>
<dbReference type="FunFam" id="3.40.50.300:FF:000283">
    <property type="entry name" value="DNA mismatch repair protein MutS"/>
    <property type="match status" value="1"/>
</dbReference>
<dbReference type="Gene3D" id="1.10.1420.10">
    <property type="match status" value="2"/>
</dbReference>
<dbReference type="Gene3D" id="6.10.140.430">
    <property type="match status" value="1"/>
</dbReference>
<dbReference type="Gene3D" id="3.40.1170.10">
    <property type="entry name" value="DNA repair protein MutS, domain I"/>
    <property type="match status" value="1"/>
</dbReference>
<dbReference type="Gene3D" id="3.30.420.110">
    <property type="entry name" value="MutS, connector domain"/>
    <property type="match status" value="1"/>
</dbReference>
<dbReference type="Gene3D" id="3.40.50.300">
    <property type="entry name" value="P-loop containing nucleotide triphosphate hydrolases"/>
    <property type="match status" value="1"/>
</dbReference>
<dbReference type="HAMAP" id="MF_00096">
    <property type="entry name" value="MutS"/>
    <property type="match status" value="1"/>
</dbReference>
<dbReference type="InterPro" id="IPR005748">
    <property type="entry name" value="DNA_mismatch_repair_MutS"/>
</dbReference>
<dbReference type="InterPro" id="IPR007695">
    <property type="entry name" value="DNA_mismatch_repair_MutS-lik_N"/>
</dbReference>
<dbReference type="InterPro" id="IPR017261">
    <property type="entry name" value="DNA_mismatch_repair_MutS/MSH"/>
</dbReference>
<dbReference type="InterPro" id="IPR000432">
    <property type="entry name" value="DNA_mismatch_repair_MutS_C"/>
</dbReference>
<dbReference type="InterPro" id="IPR007861">
    <property type="entry name" value="DNA_mismatch_repair_MutS_clamp"/>
</dbReference>
<dbReference type="InterPro" id="IPR007696">
    <property type="entry name" value="DNA_mismatch_repair_MutS_core"/>
</dbReference>
<dbReference type="InterPro" id="IPR016151">
    <property type="entry name" value="DNA_mismatch_repair_MutS_N"/>
</dbReference>
<dbReference type="InterPro" id="IPR036187">
    <property type="entry name" value="DNA_mismatch_repair_MutS_sf"/>
</dbReference>
<dbReference type="InterPro" id="IPR007860">
    <property type="entry name" value="DNA_mmatch_repair_MutS_con_dom"/>
</dbReference>
<dbReference type="InterPro" id="IPR045076">
    <property type="entry name" value="MutS"/>
</dbReference>
<dbReference type="InterPro" id="IPR036678">
    <property type="entry name" value="MutS_con_dom_sf"/>
</dbReference>
<dbReference type="InterPro" id="IPR027417">
    <property type="entry name" value="P-loop_NTPase"/>
</dbReference>
<dbReference type="NCBIfam" id="TIGR01070">
    <property type="entry name" value="mutS1"/>
    <property type="match status" value="1"/>
</dbReference>
<dbReference type="NCBIfam" id="NF003810">
    <property type="entry name" value="PRK05399.1"/>
    <property type="match status" value="1"/>
</dbReference>
<dbReference type="PANTHER" id="PTHR11361:SF34">
    <property type="entry name" value="DNA MISMATCH REPAIR PROTEIN MSH1, MITOCHONDRIAL"/>
    <property type="match status" value="1"/>
</dbReference>
<dbReference type="PANTHER" id="PTHR11361">
    <property type="entry name" value="DNA MISMATCH REPAIR PROTEIN MUTS FAMILY MEMBER"/>
    <property type="match status" value="1"/>
</dbReference>
<dbReference type="Pfam" id="PF01624">
    <property type="entry name" value="MutS_I"/>
    <property type="match status" value="1"/>
</dbReference>
<dbReference type="Pfam" id="PF05188">
    <property type="entry name" value="MutS_II"/>
    <property type="match status" value="1"/>
</dbReference>
<dbReference type="Pfam" id="PF05192">
    <property type="entry name" value="MutS_III"/>
    <property type="match status" value="1"/>
</dbReference>
<dbReference type="Pfam" id="PF05190">
    <property type="entry name" value="MutS_IV"/>
    <property type="match status" value="1"/>
</dbReference>
<dbReference type="Pfam" id="PF00488">
    <property type="entry name" value="MutS_V"/>
    <property type="match status" value="1"/>
</dbReference>
<dbReference type="PIRSF" id="PIRSF037677">
    <property type="entry name" value="DNA_mis_repair_Msh6"/>
    <property type="match status" value="1"/>
</dbReference>
<dbReference type="SMART" id="SM00534">
    <property type="entry name" value="MUTSac"/>
    <property type="match status" value="1"/>
</dbReference>
<dbReference type="SMART" id="SM00533">
    <property type="entry name" value="MUTSd"/>
    <property type="match status" value="1"/>
</dbReference>
<dbReference type="SUPFAM" id="SSF55271">
    <property type="entry name" value="DNA repair protein MutS, domain I"/>
    <property type="match status" value="1"/>
</dbReference>
<dbReference type="SUPFAM" id="SSF53150">
    <property type="entry name" value="DNA repair protein MutS, domain II"/>
    <property type="match status" value="1"/>
</dbReference>
<dbReference type="SUPFAM" id="SSF48334">
    <property type="entry name" value="DNA repair protein MutS, domain III"/>
    <property type="match status" value="1"/>
</dbReference>
<dbReference type="SUPFAM" id="SSF52540">
    <property type="entry name" value="P-loop containing nucleoside triphosphate hydrolases"/>
    <property type="match status" value="1"/>
</dbReference>
<dbReference type="PROSITE" id="PS00486">
    <property type="entry name" value="DNA_MISMATCH_REPAIR_2"/>
    <property type="match status" value="1"/>
</dbReference>
<organism>
    <name type="scientific">Histophilus somni (strain 129Pt)</name>
    <name type="common">Haemophilus somnus</name>
    <dbReference type="NCBI Taxonomy" id="205914"/>
    <lineage>
        <taxon>Bacteria</taxon>
        <taxon>Pseudomonadati</taxon>
        <taxon>Pseudomonadota</taxon>
        <taxon>Gammaproteobacteria</taxon>
        <taxon>Pasteurellales</taxon>
        <taxon>Pasteurellaceae</taxon>
        <taxon>Histophilus</taxon>
    </lineage>
</organism>
<keyword id="KW-0067">ATP-binding</keyword>
<keyword id="KW-0227">DNA damage</keyword>
<keyword id="KW-0234">DNA repair</keyword>
<keyword id="KW-0238">DNA-binding</keyword>
<keyword id="KW-0547">Nucleotide-binding</keyword>
<sequence length="856" mass="95954">MHTFENHTPMMKQYLKIKAENPDVLLFYRMGDFYELFYDDAKKAAELLDISLTKRGQSAGQPVPMAGVPYHAIEGYLAKLVHLGESVAICEQVGEPVIAKGPVERQVVRIVTPGTVSDEALLPEKQDNLIATIYQEKTQFGLAVLDMTSGCFQISELQDAASLQAELQRIQPVELLYSEALEDKHLIEQFKGLRRRPLWEFELSTAIQLLNRQFGTKDLRGFGVEKAVLGLCAAGCLLQYAKETQRTALPHIQSISLLQNSDTVQIDASTRRNLELTQNLAGGTENTLAAILDKCVTPMGSRLLKRWIHQPIRNIEKLQCRQQHIQMLLQQNLVEELQPLLRQVGDMERILARVALRSARPRDLTRLRTALEQIPFIQHQLTKIPHFVAFSQQIADFSVQLALLQRAIIDNPPLLIRDGGVIAEGYNEELDEWRSLSEGATRYLKDLEQRERANTGIDTLKIGFNAVHGYYIQISQGQAHKAPLHYVRRQTLKNAERYIIPELKTYEEKVLKAKGASLALEKQLYDEIFDQLLPHLGDLQLASLTLAELDVLTNLAERAETLNYVQPQFSTQIGLQIMQGRHPVVEQVLKDPFIANPVELNQKRHLLIITGPNMGGKSTYMRQTALITLMAYIGSFVPAESAVIGPIDRIFTRIGASDDLASGRSTFMVEMTEMANILHQATEQSLVLIDEIGRGTSTYDGLSLAWACAEQLAQKIRSLTLFATHYFELTVLPEKIDGIHNVHLDAIEHNDNIAFMHSIQEGAASKSYGLAVAALAGVPQNVIKSAKQKLKQLETLSQQNSCQSQSVLTQVQGELTLMEEEENTSAVIETLKTLDPNELSPKQALECLYQLKKMLN</sequence>
<accession>Q0I1B8</accession>
<feature type="chain" id="PRO_1000008065" description="DNA mismatch repair protein MutS">
    <location>
        <begin position="1"/>
        <end position="856"/>
    </location>
</feature>
<feature type="binding site" evidence="1">
    <location>
        <begin position="611"/>
        <end position="618"/>
    </location>
    <ligand>
        <name>ATP</name>
        <dbReference type="ChEBI" id="CHEBI:30616"/>
    </ligand>
</feature>
<evidence type="ECO:0000255" key="1">
    <source>
        <dbReference type="HAMAP-Rule" id="MF_00096"/>
    </source>
</evidence>
<reference key="1">
    <citation type="journal article" date="2007" name="J. Bacteriol.">
        <title>Complete genome sequence of Haemophilus somnus (Histophilus somni) strain 129Pt and comparison to Haemophilus ducreyi 35000HP and Haemophilus influenzae Rd.</title>
        <authorList>
            <person name="Challacombe J.F."/>
            <person name="Duncan A.J."/>
            <person name="Brettin T.S."/>
            <person name="Bruce D."/>
            <person name="Chertkov O."/>
            <person name="Detter J.C."/>
            <person name="Han C.S."/>
            <person name="Misra M."/>
            <person name="Richardson P."/>
            <person name="Tapia R."/>
            <person name="Thayer N."/>
            <person name="Xie G."/>
            <person name="Inzana T.J."/>
        </authorList>
    </citation>
    <scope>NUCLEOTIDE SEQUENCE [LARGE SCALE GENOMIC DNA]</scope>
    <source>
        <strain>129Pt</strain>
    </source>
</reference>
<name>MUTS_HISS1</name>
<protein>
    <recommendedName>
        <fullName evidence="1">DNA mismatch repair protein MutS</fullName>
    </recommendedName>
</protein>
<proteinExistence type="inferred from homology"/>
<comment type="function">
    <text evidence="1">This protein is involved in the repair of mismatches in DNA. It is possible that it carries out the mismatch recognition step. This protein has a weak ATPase activity.</text>
</comment>
<comment type="similarity">
    <text evidence="1">Belongs to the DNA mismatch repair MutS family.</text>
</comment>